<keyword id="KW-0002">3D-structure</keyword>
<keyword id="KW-0165">Cleavage on pair of basic residues</keyword>
<keyword id="KW-0175">Coiled coil</keyword>
<keyword id="KW-1015">Disulfide bond</keyword>
<keyword id="KW-1169">Fusion of virus membrane with host cell membrane</keyword>
<keyword id="KW-1168">Fusion of virus membrane with host membrane</keyword>
<keyword id="KW-0325">Glycoprotein</keyword>
<keyword id="KW-1032">Host cell membrane</keyword>
<keyword id="KW-1043">Host membrane</keyword>
<keyword id="KW-0945">Host-virus interaction</keyword>
<keyword id="KW-0472">Membrane</keyword>
<keyword id="KW-0732">Signal</keyword>
<keyword id="KW-0812">Transmembrane</keyword>
<keyword id="KW-1133">Transmembrane helix</keyword>
<keyword id="KW-1161">Viral attachment to host cell</keyword>
<keyword id="KW-0261">Viral envelope protein</keyword>
<keyword id="KW-1162">Viral penetration into host cytoplasm</keyword>
<keyword id="KW-0946">Virion</keyword>
<keyword id="KW-1160">Virus entry into host cell</keyword>
<comment type="function">
    <text evidence="1">The surface protein (SU) attaches the virus to the host cell by binding to its receptor. This interaction triggers the refolding of the transmembrane protein (TM) and is thought to activate its fusogenic potential by unmasking its fusion peptide. Fusion occurs at the host cell plasma membrane (By similarity).</text>
</comment>
<comment type="function">
    <text evidence="1">The transmembrane protein (TM) acts as a class I viral fusion protein. Under the current model, the protein has at least 3 conformational states: pre-fusion native state, pre-hairpin intermediate state, and post-fusion hairpin state. During viral and target cell membrane fusion, the coiled coil regions (heptad repeats) assume a trimer-of-hairpins structure, positioning the fusion peptide in close proximity to the C-terminal region of the ectodomain. The formation of this structure appears to drive apposition and subsequent fusion of viral and target cell membranes. Membranes fusion leads to delivery of the nucleocapsid into the cytoplasm (By similarity).</text>
</comment>
<comment type="subunit">
    <text evidence="1">The mature envelope protein (Env) consists of a trimer of SU-TM heterodimers attached by a labile interchain disulfide bond.</text>
</comment>
<comment type="subcellular location">
    <molecule>Transmembrane protein</molecule>
    <subcellularLocation>
        <location evidence="1">Virion membrane</location>
        <topology evidence="1">Single-pass type I membrane protein</topology>
    </subcellularLocation>
    <subcellularLocation>
        <location evidence="1">Host cell membrane</location>
        <topology evidence="1">Single-pass type I membrane protein</topology>
    </subcellularLocation>
</comment>
<comment type="subcellular location">
    <molecule>Surface protein</molecule>
    <subcellularLocation>
        <location>Virion membrane</location>
        <topology>Peripheral membrane protein</topology>
    </subcellularLocation>
    <subcellularLocation>
        <location evidence="1">Host cell membrane</location>
        <topology evidence="1">Peripheral membrane protein</topology>
    </subcellularLocation>
    <text evidence="1">The surface protein is not anchored to the viral envelope, but associates with the extravirion surface through its binding to TM. Both proteins are thought to be concentrated at the site of budding and incorporated into the virions possibly by contacts between the cytoplasmic tail of Env and the N-terminus of Gag (By similarity).</text>
</comment>
<comment type="domain">
    <text evidence="3">The YXXL motif is involved in determining the exact site of viral release at the surface of infected mononuclear cells and promotes endocytosis.</text>
</comment>
<comment type="domain">
    <text evidence="1">The 17 amino acids long immunosuppressive region is present in many retroviral envelope proteins. Synthetic peptides derived from this relatively conserved sequence inhibit immune function in vitro and in vivo (By similarity).</text>
</comment>
<comment type="PTM">
    <text evidence="1">Specific enzymatic cleavages in vivo yield mature proteins. Envelope glycoproteins are synthesized as an inactive precursor that is N-glycosylated and processed likely by host cell furin or by a furin-like protease in the Golgi to yield the mature SU and TM proteins. The cleavage site between SU and TM requires the minimal sequence [KR]-X-[KR]-R. The R-peptide is released from the C-terminus of the cytoplasmic tail of the TM protein upon particle formation as a result of proteolytic cleavage by the viral protease. Cleavage of this peptide is required for TM to become fusogenic (By similarity).</text>
</comment>
<comment type="PTM">
    <text evidence="1">The CXXC motif is highly conserved across a broad range of retroviral envelope proteins. It is thought to participate in the formation of a labile disulfide bond possibly with the CX6CC motif present in the transmembrane protein. Isomerization of the intersubunit disulfide bond to an SU intrachain disulfide bond is thought to occur upon receptor recognition in order to allow membrane fusion (By similarity).</text>
</comment>
<sequence>MNFNYHFIWSLVILSQISQVQAGFGDPREALAEIQQKHGKPCDCAGGYVSSPPINSLTTVSCSTHTAYSVTNSLKWQCVSTPTTPSNTHIGSCPGECNTISYDSVHASCYNHYQQCNIGNKTYLTATITGDRTPAIGDGNVPTVLGTSHNLITAGCPNGKKGQVVCWNSRPSVHISDGGGPQDKARDIIVNKKFEELHRSLFPELSYHPLALPEARGKEKIDAHTLDLLATVHSLLNASQPSLAEDCWLCLQSGDPVPLALPYNDTLCSNFACLSNHSCPLTPPFLVQPFNFTDSNCLYAHYQNNSFDIDVGLASFTNCSSYYNVSTASKPSNSLCAPNSSVFVCGNNKAYTYLPTNWTGSCVLATLLPDIDIIPGSEPVPIPAIDHFLGKAKRAIQLIPLFVGLGITTAVSTGAAGLGVSITQYTKLSHQLISDVQAISSTIQDLQDQVDSLAEVVLQNRRGLDLLTAEQGGICLALQEKCCFYANKSGIVRDKIKNLQDDLERRRRQLIDNPFWTSFHGFLPYVMPLLGPLLCLLLVLSFGPIIFNKLMTFIKHQIESIQAKPIQVHYHRLEQEDSGGSYLTLT</sequence>
<reference key="1">
    <citation type="journal article" date="1986" name="Cell">
        <title>Nucleotide sequence of Mason-Pfizer monkey virus: an immunosuppressive D-type retrovirus.</title>
        <authorList>
            <person name="Sonigo P."/>
            <person name="Barker C."/>
            <person name="Hunter E."/>
            <person name="Wain-Hobson S."/>
        </authorList>
    </citation>
    <scope>NUCLEOTIDE SEQUENCE [GENOMIC RNA] (CLONE 6A)</scope>
</reference>
<reference key="2">
    <citation type="journal article" date="2005" name="J. Virol.">
        <title>Amino acid residues in the cytoplasmic domain of the Mason-Pfizer monkey virus glycoprotein critical for its incorporation into virions.</title>
        <authorList>
            <person name="Song C."/>
            <person name="Micoli K."/>
            <person name="Bauerova H."/>
            <person name="Pichova I."/>
            <person name="Hunter E."/>
        </authorList>
    </citation>
    <scope>CLEAVAGE OF R-PEPTIDE</scope>
    <scope>DOMAIN YXXL MOTIF</scope>
    <scope>MUTAGENESIS OF VAL-568 AND HIS-569</scope>
</reference>
<accession>P07575</accession>
<organism>
    <name type="scientific">Mason-Pfizer monkey virus</name>
    <name type="common">MPMV</name>
    <name type="synonym">Simian Mason-Pfizer virus</name>
    <dbReference type="NCBI Taxonomy" id="11855"/>
    <lineage>
        <taxon>Viruses</taxon>
        <taxon>Riboviria</taxon>
        <taxon>Pararnavirae</taxon>
        <taxon>Artverviricota</taxon>
        <taxon>Revtraviricetes</taxon>
        <taxon>Ortervirales</taxon>
        <taxon>Retroviridae</taxon>
        <taxon>Orthoretrovirinae</taxon>
        <taxon>Betaretrovirus</taxon>
    </lineage>
</organism>
<dbReference type="EMBL" id="M12349">
    <property type="protein sequence ID" value="AAA47712.1"/>
    <property type="molecule type" value="Genomic_RNA"/>
</dbReference>
<dbReference type="PIR" id="D25839">
    <property type="entry name" value="VCLJMP"/>
</dbReference>
<dbReference type="PDB" id="4JF3">
    <property type="method" value="X-ray"/>
    <property type="resolution" value="1.70 A"/>
    <property type="chains" value="A/B=412-513"/>
</dbReference>
<dbReference type="PDBsum" id="4JF3"/>
<dbReference type="SMR" id="P07575"/>
<dbReference type="GlyCosmos" id="P07575">
    <property type="glycosylation" value="11 sites, No reported glycans"/>
</dbReference>
<dbReference type="OrthoDB" id="2921at10239"/>
<dbReference type="EvolutionaryTrace" id="P07575"/>
<dbReference type="Proteomes" id="UP000008870">
    <property type="component" value="Genome"/>
</dbReference>
<dbReference type="GO" id="GO:0020002">
    <property type="term" value="C:host cell plasma membrane"/>
    <property type="evidence" value="ECO:0007669"/>
    <property type="project" value="UniProtKB-SubCell"/>
</dbReference>
<dbReference type="GO" id="GO:0016020">
    <property type="term" value="C:membrane"/>
    <property type="evidence" value="ECO:0007669"/>
    <property type="project" value="UniProtKB-KW"/>
</dbReference>
<dbReference type="GO" id="GO:0019031">
    <property type="term" value="C:viral envelope"/>
    <property type="evidence" value="ECO:0007669"/>
    <property type="project" value="UniProtKB-KW"/>
</dbReference>
<dbReference type="GO" id="GO:0055036">
    <property type="term" value="C:virion membrane"/>
    <property type="evidence" value="ECO:0007669"/>
    <property type="project" value="UniProtKB-SubCell"/>
</dbReference>
<dbReference type="GO" id="GO:0019064">
    <property type="term" value="P:fusion of virus membrane with host plasma membrane"/>
    <property type="evidence" value="ECO:0007669"/>
    <property type="project" value="UniProtKB-KW"/>
</dbReference>
<dbReference type="GO" id="GO:0046718">
    <property type="term" value="P:symbiont entry into host cell"/>
    <property type="evidence" value="ECO:0007669"/>
    <property type="project" value="UniProtKB-KW"/>
</dbReference>
<dbReference type="GO" id="GO:0019062">
    <property type="term" value="P:virion attachment to host cell"/>
    <property type="evidence" value="ECO:0007669"/>
    <property type="project" value="UniProtKB-KW"/>
</dbReference>
<dbReference type="CDD" id="cd09851">
    <property type="entry name" value="HTLV-1-like_HR1-HR2"/>
    <property type="match status" value="1"/>
</dbReference>
<dbReference type="Gene3D" id="1.10.287.210">
    <property type="match status" value="1"/>
</dbReference>
<dbReference type="InterPro" id="IPR018154">
    <property type="entry name" value="TLV/ENV_coat_polyprotein"/>
</dbReference>
<dbReference type="PANTHER" id="PTHR10424:SF75">
    <property type="entry name" value="ENDOGENOUS RETROVIRUS GROUP S71 MEMBER 1 ENV POLYPROTEIN"/>
    <property type="match status" value="1"/>
</dbReference>
<dbReference type="PANTHER" id="PTHR10424">
    <property type="entry name" value="VIRAL ENVELOPE PROTEIN"/>
    <property type="match status" value="1"/>
</dbReference>
<dbReference type="Pfam" id="PF00429">
    <property type="entry name" value="TLV_coat"/>
    <property type="match status" value="1"/>
</dbReference>
<dbReference type="SUPFAM" id="SSF58069">
    <property type="entry name" value="Virus ectodomain"/>
    <property type="match status" value="1"/>
</dbReference>
<proteinExistence type="evidence at protein level"/>
<evidence type="ECO:0000250" key="1"/>
<evidence type="ECO:0000255" key="2"/>
<evidence type="ECO:0000269" key="3">
    <source>
    </source>
</evidence>
<evidence type="ECO:0007829" key="4">
    <source>
        <dbReference type="PDB" id="4JF3"/>
    </source>
</evidence>
<feature type="signal peptide" evidence="2">
    <location>
        <begin position="1"/>
        <end position="22"/>
    </location>
</feature>
<feature type="chain" id="PRO_0000239595" description="Envelope glycoprotein">
    <location>
        <begin position="23"/>
        <end position="586"/>
    </location>
</feature>
<feature type="chain" id="PRO_0000040787" description="Surface protein" evidence="1">
    <location>
        <begin position="23"/>
        <end position="394"/>
    </location>
</feature>
<feature type="chain" id="PRO_0000040788" description="Transmembrane protein" evidence="1">
    <location>
        <begin position="395"/>
        <end position="568"/>
    </location>
</feature>
<feature type="peptide" id="PRO_0000239596" description="R-peptide">
    <location>
        <begin position="569"/>
        <end position="586"/>
    </location>
</feature>
<feature type="topological domain" description="Extracellular" evidence="2">
    <location>
        <begin position="23"/>
        <end position="526"/>
    </location>
</feature>
<feature type="transmembrane region" description="Helical" evidence="2">
    <location>
        <begin position="527"/>
        <end position="547"/>
    </location>
</feature>
<feature type="topological domain" description="Cytoplasmic" evidence="2">
    <location>
        <begin position="548"/>
        <end position="586"/>
    </location>
</feature>
<feature type="region of interest" description="Fusion peptide" evidence="1">
    <location>
        <begin position="398"/>
        <end position="418"/>
    </location>
</feature>
<feature type="region of interest" description="Immunosuppression" evidence="1">
    <location>
        <begin position="458"/>
        <end position="474"/>
    </location>
</feature>
<feature type="coiled-coil region" evidence="2">
    <location>
        <begin position="419"/>
        <end position="469"/>
    </location>
</feature>
<feature type="coiled-coil region" evidence="2">
    <location>
        <begin position="479"/>
        <end position="515"/>
    </location>
</feature>
<feature type="short sequence motif" description="CXXC">
    <location>
        <begin position="247"/>
        <end position="250"/>
    </location>
</feature>
<feature type="short sequence motif" description="CX6CC">
    <location>
        <begin position="475"/>
        <end position="483"/>
    </location>
</feature>
<feature type="short sequence motif" description="YXXL motif; contains endocytosis signal">
    <location>
        <begin position="570"/>
        <end position="573"/>
    </location>
</feature>
<feature type="site" description="Cleavage; by host" evidence="1">
    <location>
        <begin position="394"/>
        <end position="395"/>
    </location>
</feature>
<feature type="site" description="Cleavage; by viral protease">
    <location>
        <begin position="568"/>
        <end position="569"/>
    </location>
</feature>
<feature type="glycosylation site" description="N-linked (GlcNAc...) asparagine; by host" evidence="2">
    <location>
        <position position="120"/>
    </location>
</feature>
<feature type="glycosylation site" description="N-linked (GlcNAc...) asparagine; by host" evidence="2">
    <location>
        <position position="237"/>
    </location>
</feature>
<feature type="glycosylation site" description="N-linked (GlcNAc...) asparagine; by host" evidence="2">
    <location>
        <position position="264"/>
    </location>
</feature>
<feature type="glycosylation site" description="N-linked (GlcNAc...) asparagine; by host" evidence="2">
    <location>
        <position position="276"/>
    </location>
</feature>
<feature type="glycosylation site" description="N-linked (GlcNAc...) asparagine; by host" evidence="2">
    <location>
        <position position="291"/>
    </location>
</feature>
<feature type="glycosylation site" description="N-linked (GlcNAc...) asparagine; by host" evidence="2">
    <location>
        <position position="304"/>
    </location>
</feature>
<feature type="glycosylation site" description="N-linked (GlcNAc...) asparagine; by host" evidence="2">
    <location>
        <position position="318"/>
    </location>
</feature>
<feature type="glycosylation site" description="N-linked (GlcNAc...) asparagine; by host" evidence="2">
    <location>
        <position position="324"/>
    </location>
</feature>
<feature type="glycosylation site" description="N-linked (GlcNAc...) asparagine; by host" evidence="2">
    <location>
        <position position="339"/>
    </location>
</feature>
<feature type="glycosylation site" description="N-linked (GlcNAc...) asparagine; by host" evidence="2">
    <location>
        <position position="357"/>
    </location>
</feature>
<feature type="glycosylation site" description="N-linked (GlcNAc...) asparagine; by host" evidence="2">
    <location>
        <position position="487"/>
    </location>
</feature>
<feature type="disulfide bond" description="Interchain (between SU and TM chains, or C-250 with C-483); in linked form" evidence="1">
    <location>
        <begin position="247"/>
        <end position="483"/>
    </location>
</feature>
<feature type="disulfide bond" evidence="1">
    <location>
        <begin position="247"/>
        <end position="250"/>
    </location>
</feature>
<feature type="disulfide bond" evidence="1">
    <location>
        <begin position="475"/>
        <end position="482"/>
    </location>
</feature>
<feature type="mutagenesis site" description="Complete loss of R-peptide cleavage." evidence="3">
    <original>V</original>
    <variation>A</variation>
    <location>
        <position position="568"/>
    </location>
</feature>
<feature type="mutagenesis site" description="Complete loss of R-peptide cleavage." evidence="3">
    <original>H</original>
    <variation>A</variation>
    <location>
        <position position="569"/>
    </location>
</feature>
<feature type="mutagenesis site" description="Reduced endocytosis of TM and incorporation into virions.">
    <original>Y</original>
    <variation>A</variation>
    <location>
        <position position="570"/>
    </location>
</feature>
<feature type="mutagenesis site" description="Reduced endocytosis of TM and incorporation into virions.">
    <original>L</original>
    <variation>A</variation>
    <location>
        <position position="573"/>
    </location>
</feature>
<feature type="helix" evidence="4">
    <location>
        <begin position="424"/>
        <end position="467"/>
    </location>
</feature>
<feature type="helix" evidence="4">
    <location>
        <begin position="469"/>
        <end position="471"/>
    </location>
</feature>
<feature type="helix" evidence="4">
    <location>
        <begin position="474"/>
        <end position="478"/>
    </location>
</feature>
<feature type="helix" evidence="4">
    <location>
        <begin position="489"/>
        <end position="511"/>
    </location>
</feature>
<name>ENV_MPMV</name>
<organismHost>
    <name type="scientific">Macaca mulatta</name>
    <name type="common">Rhesus macaque</name>
    <dbReference type="NCBI Taxonomy" id="9544"/>
</organismHost>
<protein>
    <recommendedName>
        <fullName>Envelope glycoprotein</fullName>
    </recommendedName>
    <alternativeName>
        <fullName>Env polyprotein</fullName>
    </alternativeName>
    <component>
        <recommendedName>
            <fullName>Surface protein</fullName>
            <shortName>SU</shortName>
        </recommendedName>
        <alternativeName>
            <fullName>Glycoprotein 70</fullName>
            <shortName>gp70</shortName>
        </alternativeName>
    </component>
    <component>
        <recommendedName>
            <fullName>Transmembrane protein</fullName>
            <shortName>TM</shortName>
        </recommendedName>
        <alternativeName>
            <fullName>Glycoprotein 20</fullName>
            <shortName>gp20</shortName>
        </alternativeName>
    </component>
    <component>
        <recommendedName>
            <fullName>R-peptide</fullName>
        </recommendedName>
        <alternativeName>
            <fullName>p2E</fullName>
        </alternativeName>
    </component>
</protein>
<gene>
    <name type="primary">env</name>
</gene>